<reference key="1">
    <citation type="journal article" date="2001" name="Nature">
        <title>Genome sequence of enterohaemorrhagic Escherichia coli O157:H7.</title>
        <authorList>
            <person name="Perna N.T."/>
            <person name="Plunkett G. III"/>
            <person name="Burland V."/>
            <person name="Mau B."/>
            <person name="Glasner J.D."/>
            <person name="Rose D.J."/>
            <person name="Mayhew G.F."/>
            <person name="Evans P.S."/>
            <person name="Gregor J."/>
            <person name="Kirkpatrick H.A."/>
            <person name="Posfai G."/>
            <person name="Hackett J."/>
            <person name="Klink S."/>
            <person name="Boutin A."/>
            <person name="Shao Y."/>
            <person name="Miller L."/>
            <person name="Grotbeck E.J."/>
            <person name="Davis N.W."/>
            <person name="Lim A."/>
            <person name="Dimalanta E.T."/>
            <person name="Potamousis K."/>
            <person name="Apodaca J."/>
            <person name="Anantharaman T.S."/>
            <person name="Lin J."/>
            <person name="Yen G."/>
            <person name="Schwartz D.C."/>
            <person name="Welch R.A."/>
            <person name="Blattner F.R."/>
        </authorList>
    </citation>
    <scope>NUCLEOTIDE SEQUENCE [LARGE SCALE GENOMIC DNA]</scope>
    <source>
        <strain>O157:H7 / EDL933 / ATCC 700927 / EHEC</strain>
    </source>
</reference>
<reference key="2">
    <citation type="journal article" date="2001" name="DNA Res.">
        <title>Complete genome sequence of enterohemorrhagic Escherichia coli O157:H7 and genomic comparison with a laboratory strain K-12.</title>
        <authorList>
            <person name="Hayashi T."/>
            <person name="Makino K."/>
            <person name="Ohnishi M."/>
            <person name="Kurokawa K."/>
            <person name="Ishii K."/>
            <person name="Yokoyama K."/>
            <person name="Han C.-G."/>
            <person name="Ohtsubo E."/>
            <person name="Nakayama K."/>
            <person name="Murata T."/>
            <person name="Tanaka M."/>
            <person name="Tobe T."/>
            <person name="Iida T."/>
            <person name="Takami H."/>
            <person name="Honda T."/>
            <person name="Sasakawa C."/>
            <person name="Ogasawara N."/>
            <person name="Yasunaga T."/>
            <person name="Kuhara S."/>
            <person name="Shiba T."/>
            <person name="Hattori M."/>
            <person name="Shinagawa H."/>
        </authorList>
    </citation>
    <scope>NUCLEOTIDE SEQUENCE [LARGE SCALE GENOMIC DNA]</scope>
    <source>
        <strain>O157:H7 / Sakai / RIMD 0509952 / EHEC</strain>
    </source>
</reference>
<feature type="chain" id="PRO_0000209297" description="UPF0250 protein YbeD">
    <location>
        <begin position="1"/>
        <end position="87"/>
    </location>
</feature>
<accession>P0A8J6</accession>
<accession>P30977</accession>
<name>YBED_ECO57</name>
<dbReference type="EMBL" id="AE005174">
    <property type="protein sequence ID" value="AAG54965.1"/>
    <property type="molecule type" value="Genomic_DNA"/>
</dbReference>
<dbReference type="EMBL" id="BA000007">
    <property type="protein sequence ID" value="BAB34092.1"/>
    <property type="molecule type" value="Genomic_DNA"/>
</dbReference>
<dbReference type="PIR" id="A85563">
    <property type="entry name" value="A85563"/>
</dbReference>
<dbReference type="PIR" id="E90712">
    <property type="entry name" value="E90712"/>
</dbReference>
<dbReference type="RefSeq" id="NP_308696.1">
    <property type="nucleotide sequence ID" value="NC_002695.1"/>
</dbReference>
<dbReference type="RefSeq" id="WP_000850550.1">
    <property type="nucleotide sequence ID" value="NZ_VOAI01000012.1"/>
</dbReference>
<dbReference type="SMR" id="P0A8J6"/>
<dbReference type="STRING" id="155864.Z0776"/>
<dbReference type="GeneID" id="917029"/>
<dbReference type="GeneID" id="93776851"/>
<dbReference type="KEGG" id="ece:Z0776"/>
<dbReference type="KEGG" id="ecs:ECs_0669"/>
<dbReference type="PATRIC" id="fig|386585.9.peg.780"/>
<dbReference type="eggNOG" id="COG2921">
    <property type="taxonomic scope" value="Bacteria"/>
</dbReference>
<dbReference type="HOGENOM" id="CLU_161438_2_1_6"/>
<dbReference type="OMA" id="MNTKFDE"/>
<dbReference type="Proteomes" id="UP000000558">
    <property type="component" value="Chromosome"/>
</dbReference>
<dbReference type="Proteomes" id="UP000002519">
    <property type="component" value="Chromosome"/>
</dbReference>
<dbReference type="GO" id="GO:0005829">
    <property type="term" value="C:cytosol"/>
    <property type="evidence" value="ECO:0007669"/>
    <property type="project" value="TreeGrafter"/>
</dbReference>
<dbReference type="FunFam" id="3.30.70.260:FF:000002">
    <property type="entry name" value="UPF0250 protein YbeD"/>
    <property type="match status" value="1"/>
</dbReference>
<dbReference type="Gene3D" id="3.30.70.260">
    <property type="match status" value="1"/>
</dbReference>
<dbReference type="HAMAP" id="MF_00659">
    <property type="entry name" value="UPF0250"/>
    <property type="match status" value="1"/>
</dbReference>
<dbReference type="InterPro" id="IPR007454">
    <property type="entry name" value="UPF0250_YbeD-like"/>
</dbReference>
<dbReference type="InterPro" id="IPR027471">
    <property type="entry name" value="YbeD-like_sf"/>
</dbReference>
<dbReference type="NCBIfam" id="NF003447">
    <property type="entry name" value="PRK04998.1"/>
    <property type="match status" value="1"/>
</dbReference>
<dbReference type="PANTHER" id="PTHR38036">
    <property type="entry name" value="UPF0250 PROTEIN YBED"/>
    <property type="match status" value="1"/>
</dbReference>
<dbReference type="PANTHER" id="PTHR38036:SF1">
    <property type="entry name" value="UPF0250 PROTEIN YBED"/>
    <property type="match status" value="1"/>
</dbReference>
<dbReference type="Pfam" id="PF04359">
    <property type="entry name" value="DUF493"/>
    <property type="match status" value="1"/>
</dbReference>
<dbReference type="SUPFAM" id="SSF117991">
    <property type="entry name" value="YbeD/HP0495-like"/>
    <property type="match status" value="1"/>
</dbReference>
<protein>
    <recommendedName>
        <fullName>UPF0250 protein YbeD</fullName>
    </recommendedName>
</protein>
<keyword id="KW-1185">Reference proteome</keyword>
<evidence type="ECO:0000305" key="1"/>
<sequence>MKTKLNELLEFPTPFTYKVMGQALPELVDQVVEVVQRHAPGDYTPTVKPSSKGNYHSVSITINATHIEQVETLYEELGKIDIVRMVL</sequence>
<proteinExistence type="inferred from homology"/>
<organism>
    <name type="scientific">Escherichia coli O157:H7</name>
    <dbReference type="NCBI Taxonomy" id="83334"/>
    <lineage>
        <taxon>Bacteria</taxon>
        <taxon>Pseudomonadati</taxon>
        <taxon>Pseudomonadota</taxon>
        <taxon>Gammaproteobacteria</taxon>
        <taxon>Enterobacterales</taxon>
        <taxon>Enterobacteriaceae</taxon>
        <taxon>Escherichia</taxon>
    </lineage>
</organism>
<comment type="similarity">
    <text evidence="1">Belongs to the UPF0250 family.</text>
</comment>
<gene>
    <name type="primary">ybeD</name>
    <name type="ordered locus">Z0776</name>
    <name type="ordered locus">ECs0669</name>
</gene>